<evidence type="ECO:0000255" key="1">
    <source>
        <dbReference type="HAMAP-Rule" id="MF_01325"/>
    </source>
</evidence>
<evidence type="ECO:0000256" key="2">
    <source>
        <dbReference type="SAM" id="MobiDB-lite"/>
    </source>
</evidence>
<evidence type="ECO:0000305" key="3"/>
<proteinExistence type="inferred from homology"/>
<reference key="1">
    <citation type="journal article" date="2011" name="Stand. Genomic Sci.">
        <title>Complete genome sequence of 'Thioalkalivibrio sulfidophilus' HL-EbGr7.</title>
        <authorList>
            <person name="Muyzer G."/>
            <person name="Sorokin D.Y."/>
            <person name="Mavromatis K."/>
            <person name="Lapidus A."/>
            <person name="Clum A."/>
            <person name="Ivanova N."/>
            <person name="Pati A."/>
            <person name="d'Haeseleer P."/>
            <person name="Woyke T."/>
            <person name="Kyrpides N.C."/>
        </authorList>
    </citation>
    <scope>NUCLEOTIDE SEQUENCE [LARGE SCALE GENOMIC DNA]</scope>
    <source>
        <strain>HL-EbGR7</strain>
    </source>
</reference>
<protein>
    <recommendedName>
        <fullName evidence="1">Large ribosomal subunit protein uL3</fullName>
    </recommendedName>
    <alternativeName>
        <fullName evidence="3">50S ribosomal protein L3</fullName>
    </alternativeName>
</protein>
<name>RL3_THISH</name>
<dbReference type="EMBL" id="CP001339">
    <property type="protein sequence ID" value="ACL73404.1"/>
    <property type="molecule type" value="Genomic_DNA"/>
</dbReference>
<dbReference type="RefSeq" id="WP_012638880.1">
    <property type="nucleotide sequence ID" value="NC_011901.1"/>
</dbReference>
<dbReference type="SMR" id="B8GV58"/>
<dbReference type="STRING" id="396588.Tgr7_2324"/>
<dbReference type="KEGG" id="tgr:Tgr7_2324"/>
<dbReference type="eggNOG" id="COG0087">
    <property type="taxonomic scope" value="Bacteria"/>
</dbReference>
<dbReference type="HOGENOM" id="CLU_044142_4_1_6"/>
<dbReference type="OrthoDB" id="9806135at2"/>
<dbReference type="Proteomes" id="UP000002383">
    <property type="component" value="Chromosome"/>
</dbReference>
<dbReference type="GO" id="GO:0022625">
    <property type="term" value="C:cytosolic large ribosomal subunit"/>
    <property type="evidence" value="ECO:0007669"/>
    <property type="project" value="TreeGrafter"/>
</dbReference>
<dbReference type="GO" id="GO:0019843">
    <property type="term" value="F:rRNA binding"/>
    <property type="evidence" value="ECO:0007669"/>
    <property type="project" value="UniProtKB-UniRule"/>
</dbReference>
<dbReference type="GO" id="GO:0003735">
    <property type="term" value="F:structural constituent of ribosome"/>
    <property type="evidence" value="ECO:0007669"/>
    <property type="project" value="InterPro"/>
</dbReference>
<dbReference type="GO" id="GO:0006412">
    <property type="term" value="P:translation"/>
    <property type="evidence" value="ECO:0007669"/>
    <property type="project" value="UniProtKB-UniRule"/>
</dbReference>
<dbReference type="FunFam" id="2.40.30.10:FF:000004">
    <property type="entry name" value="50S ribosomal protein L3"/>
    <property type="match status" value="1"/>
</dbReference>
<dbReference type="FunFam" id="3.30.160.810:FF:000001">
    <property type="entry name" value="50S ribosomal protein L3"/>
    <property type="match status" value="1"/>
</dbReference>
<dbReference type="Gene3D" id="3.30.160.810">
    <property type="match status" value="1"/>
</dbReference>
<dbReference type="Gene3D" id="2.40.30.10">
    <property type="entry name" value="Translation factors"/>
    <property type="match status" value="1"/>
</dbReference>
<dbReference type="HAMAP" id="MF_01325_B">
    <property type="entry name" value="Ribosomal_uL3_B"/>
    <property type="match status" value="1"/>
</dbReference>
<dbReference type="InterPro" id="IPR000597">
    <property type="entry name" value="Ribosomal_uL3"/>
</dbReference>
<dbReference type="InterPro" id="IPR019927">
    <property type="entry name" value="Ribosomal_uL3_bac/org-type"/>
</dbReference>
<dbReference type="InterPro" id="IPR019926">
    <property type="entry name" value="Ribosomal_uL3_CS"/>
</dbReference>
<dbReference type="InterPro" id="IPR009000">
    <property type="entry name" value="Transl_B-barrel_sf"/>
</dbReference>
<dbReference type="NCBIfam" id="TIGR03625">
    <property type="entry name" value="L3_bact"/>
    <property type="match status" value="1"/>
</dbReference>
<dbReference type="PANTHER" id="PTHR11229">
    <property type="entry name" value="50S RIBOSOMAL PROTEIN L3"/>
    <property type="match status" value="1"/>
</dbReference>
<dbReference type="PANTHER" id="PTHR11229:SF16">
    <property type="entry name" value="LARGE RIBOSOMAL SUBUNIT PROTEIN UL3C"/>
    <property type="match status" value="1"/>
</dbReference>
<dbReference type="Pfam" id="PF00297">
    <property type="entry name" value="Ribosomal_L3"/>
    <property type="match status" value="1"/>
</dbReference>
<dbReference type="SUPFAM" id="SSF50447">
    <property type="entry name" value="Translation proteins"/>
    <property type="match status" value="1"/>
</dbReference>
<dbReference type="PROSITE" id="PS00474">
    <property type="entry name" value="RIBOSOMAL_L3"/>
    <property type="match status" value="1"/>
</dbReference>
<feature type="chain" id="PRO_1000165913" description="Large ribosomal subunit protein uL3">
    <location>
        <begin position="1"/>
        <end position="214"/>
    </location>
</feature>
<feature type="region of interest" description="Disordered" evidence="2">
    <location>
        <begin position="136"/>
        <end position="156"/>
    </location>
</feature>
<feature type="modified residue" description="N5-methylglutamine" evidence="1">
    <location>
        <position position="153"/>
    </location>
</feature>
<organism>
    <name type="scientific">Thioalkalivibrio sulfidiphilus (strain HL-EbGR7)</name>
    <dbReference type="NCBI Taxonomy" id="396588"/>
    <lineage>
        <taxon>Bacteria</taxon>
        <taxon>Pseudomonadati</taxon>
        <taxon>Pseudomonadota</taxon>
        <taxon>Gammaproteobacteria</taxon>
        <taxon>Chromatiales</taxon>
        <taxon>Ectothiorhodospiraceae</taxon>
        <taxon>Thioalkalivibrio</taxon>
    </lineage>
</organism>
<gene>
    <name evidence="1" type="primary">rplC</name>
    <name type="ordered locus">Tgr7_2324</name>
</gene>
<comment type="function">
    <text evidence="1">One of the primary rRNA binding proteins, it binds directly near the 3'-end of the 23S rRNA, where it nucleates assembly of the 50S subunit.</text>
</comment>
<comment type="subunit">
    <text evidence="1">Part of the 50S ribosomal subunit. Forms a cluster with proteins L14 and L19.</text>
</comment>
<comment type="PTM">
    <text evidence="1">Methylated by PrmB.</text>
</comment>
<comment type="similarity">
    <text evidence="1">Belongs to the universal ribosomal protein uL3 family.</text>
</comment>
<accession>B8GV58</accession>
<sequence>MAIGLVGRKLGMTRVFTEDGASLPVTVIEVDPNRVTQVKTEERDGYRALQVTTGARKASRVTKPRAGHFAKAGVEAGRGLWEFRLDGDQGAEIETGAELKVDIFEAGQIVDVTGISKGKGFQGVIKRHNFSMQDATHGNSLSHRAPGSIGQNQTPGRVFKGKKMAGHMGNERCTVQNLEVVRVDVERNLLLIKGAVPGSTGGNVLVRPGVKAKG</sequence>
<keyword id="KW-0488">Methylation</keyword>
<keyword id="KW-1185">Reference proteome</keyword>
<keyword id="KW-0687">Ribonucleoprotein</keyword>
<keyword id="KW-0689">Ribosomal protein</keyword>
<keyword id="KW-0694">RNA-binding</keyword>
<keyword id="KW-0699">rRNA-binding</keyword>